<dbReference type="EC" id="3.5.4.2" evidence="1"/>
<dbReference type="EMBL" id="CP000879">
    <property type="protein sequence ID" value="ABX32437.1"/>
    <property type="molecule type" value="Genomic_DNA"/>
</dbReference>
<dbReference type="RefSeq" id="WP_012209534.1">
    <property type="nucleotide sequence ID" value="NC_010003.1"/>
</dbReference>
<dbReference type="SMR" id="A9BIU9"/>
<dbReference type="STRING" id="403833.Pmob_1744"/>
<dbReference type="KEGG" id="pmo:Pmob_1744"/>
<dbReference type="eggNOG" id="COG1001">
    <property type="taxonomic scope" value="Bacteria"/>
</dbReference>
<dbReference type="HOGENOM" id="CLU_027935_0_0_0"/>
<dbReference type="OrthoDB" id="9775607at2"/>
<dbReference type="Proteomes" id="UP000000789">
    <property type="component" value="Chromosome"/>
</dbReference>
<dbReference type="GO" id="GO:0000034">
    <property type="term" value="F:adenine deaminase activity"/>
    <property type="evidence" value="ECO:0007669"/>
    <property type="project" value="UniProtKB-UniRule"/>
</dbReference>
<dbReference type="GO" id="GO:0006146">
    <property type="term" value="P:adenine catabolic process"/>
    <property type="evidence" value="ECO:0007669"/>
    <property type="project" value="InterPro"/>
</dbReference>
<dbReference type="CDD" id="cd01295">
    <property type="entry name" value="AdeC"/>
    <property type="match status" value="1"/>
</dbReference>
<dbReference type="Gene3D" id="3.20.20.140">
    <property type="entry name" value="Metal-dependent hydrolases"/>
    <property type="match status" value="1"/>
</dbReference>
<dbReference type="Gene3D" id="2.30.40.10">
    <property type="entry name" value="Urease, subunit C, domain 1"/>
    <property type="match status" value="1"/>
</dbReference>
<dbReference type="HAMAP" id="MF_01518">
    <property type="entry name" value="Adenine_deamin"/>
    <property type="match status" value="1"/>
</dbReference>
<dbReference type="InterPro" id="IPR006679">
    <property type="entry name" value="Adenine_deam"/>
</dbReference>
<dbReference type="InterPro" id="IPR026912">
    <property type="entry name" value="Adenine_deam_C"/>
</dbReference>
<dbReference type="InterPro" id="IPR006680">
    <property type="entry name" value="Amidohydro-rel"/>
</dbReference>
<dbReference type="InterPro" id="IPR011059">
    <property type="entry name" value="Metal-dep_hydrolase_composite"/>
</dbReference>
<dbReference type="InterPro" id="IPR032466">
    <property type="entry name" value="Metal_Hydrolase"/>
</dbReference>
<dbReference type="NCBIfam" id="TIGR01178">
    <property type="entry name" value="ade"/>
    <property type="match status" value="1"/>
</dbReference>
<dbReference type="PANTHER" id="PTHR11113:SF2">
    <property type="entry name" value="ADENINE DEAMINASE"/>
    <property type="match status" value="1"/>
</dbReference>
<dbReference type="PANTHER" id="PTHR11113">
    <property type="entry name" value="N-ACETYLGLUCOSAMINE-6-PHOSPHATE DEACETYLASE"/>
    <property type="match status" value="1"/>
</dbReference>
<dbReference type="Pfam" id="PF13382">
    <property type="entry name" value="Adenine_deam_C"/>
    <property type="match status" value="1"/>
</dbReference>
<dbReference type="Pfam" id="PF01979">
    <property type="entry name" value="Amidohydro_1"/>
    <property type="match status" value="1"/>
</dbReference>
<dbReference type="SUPFAM" id="SSF51338">
    <property type="entry name" value="Composite domain of metallo-dependent hydrolases"/>
    <property type="match status" value="1"/>
</dbReference>
<dbReference type="SUPFAM" id="SSF51556">
    <property type="entry name" value="Metallo-dependent hydrolases"/>
    <property type="match status" value="1"/>
</dbReference>
<sequence length="570" mass="63017">MSNKDLLPIALGKEKADLVFKNGKIIDVFNEKVIEEDLAISNGVIIGFGKYEGKEEVDLEGKFISPGFIDAHLHLESAMVTIEEFAKTVIPLGTLTLVADPHEIANVAGKVGIKYFLTIGNNIPWNFNLMVPSCVPVTTFDKSGSVLNAEKIKELITEENFFGLGEVMDYEGVITGQDYIWDKIELMKDYFIDGHAPKLQGKILNAYLLAGIMADHETTSPNEALEKISKGMYIMVREGSVTRDLQSLLPAINDKNNCNFLFATDDKHPEDLISEGHINFMIKKAIKLGMEPFRAIKLATLNAARSLGLHRLGGIAPGYKADLLIIDNLDELGIFQVYKDGKKVAENGKALFQVNSNNFERPPTIFHSVNIAPIREEDFKIPKGKTYRVINMIQDQIITGEDFFSFPDSFEEERFIRYNINKIAVVERHKSTGKIGLGLIRGFGLESGAIASSIAHDSHNIIVLGTNSCDMKIAVEKIAEIQGGIVIANNQKIVDFIELPIGGLISTDPIGKVSEKLQELRKIVHNLGVKTNSPFMTLAFMGLPVVPKLKITCDGLYDVENHIFVSLVVN</sequence>
<keyword id="KW-0378">Hydrolase</keyword>
<keyword id="KW-0464">Manganese</keyword>
<gene>
    <name evidence="1" type="primary">ade</name>
    <name type="ordered locus">Pmob_1744</name>
</gene>
<organism>
    <name type="scientific">Petrotoga mobilis (strain DSM 10674 / SJ95)</name>
    <dbReference type="NCBI Taxonomy" id="403833"/>
    <lineage>
        <taxon>Bacteria</taxon>
        <taxon>Thermotogati</taxon>
        <taxon>Thermotogota</taxon>
        <taxon>Thermotogae</taxon>
        <taxon>Petrotogales</taxon>
        <taxon>Petrotogaceae</taxon>
        <taxon>Petrotoga</taxon>
    </lineage>
</organism>
<comment type="catalytic activity">
    <reaction evidence="1">
        <text>adenine + H2O + H(+) = hypoxanthine + NH4(+)</text>
        <dbReference type="Rhea" id="RHEA:23688"/>
        <dbReference type="ChEBI" id="CHEBI:15377"/>
        <dbReference type="ChEBI" id="CHEBI:15378"/>
        <dbReference type="ChEBI" id="CHEBI:16708"/>
        <dbReference type="ChEBI" id="CHEBI:17368"/>
        <dbReference type="ChEBI" id="CHEBI:28938"/>
        <dbReference type="EC" id="3.5.4.2"/>
    </reaction>
</comment>
<comment type="cofactor">
    <cofactor evidence="1">
        <name>Mn(2+)</name>
        <dbReference type="ChEBI" id="CHEBI:29035"/>
    </cofactor>
</comment>
<comment type="similarity">
    <text evidence="1">Belongs to the metallo-dependent hydrolases superfamily. Adenine deaminase family.</text>
</comment>
<accession>A9BIU9</accession>
<feature type="chain" id="PRO_1000146245" description="Adenine deaminase">
    <location>
        <begin position="1"/>
        <end position="570"/>
    </location>
</feature>
<protein>
    <recommendedName>
        <fullName evidence="1">Adenine deaminase</fullName>
        <shortName evidence="1">Adenase</shortName>
        <shortName evidence="1">Adenine aminase</shortName>
        <ecNumber evidence="1">3.5.4.2</ecNumber>
    </recommendedName>
</protein>
<proteinExistence type="inferred from homology"/>
<reference key="1">
    <citation type="submission" date="2007-11" db="EMBL/GenBank/DDBJ databases">
        <title>Complete sequence of Petroga mobilis SJ95.</title>
        <authorList>
            <consortium name="US DOE Joint Genome Institute"/>
            <person name="Copeland A."/>
            <person name="Lucas S."/>
            <person name="Lapidus A."/>
            <person name="Barry K."/>
            <person name="Glavina del Rio T."/>
            <person name="Dalin E."/>
            <person name="Tice H."/>
            <person name="Pitluck S."/>
            <person name="Meincke L."/>
            <person name="Brettin T."/>
            <person name="Bruce D."/>
            <person name="Detter J.C."/>
            <person name="Han C."/>
            <person name="Kuske C.R."/>
            <person name="Schmutz J."/>
            <person name="Larimer F."/>
            <person name="Land M."/>
            <person name="Hauser L."/>
            <person name="Kyrpides N."/>
            <person name="Mikhailova N."/>
            <person name="Noll K."/>
            <person name="Richardson P."/>
        </authorList>
    </citation>
    <scope>NUCLEOTIDE SEQUENCE [LARGE SCALE GENOMIC DNA]</scope>
    <source>
        <strain>DSM 10674 / SJ95</strain>
    </source>
</reference>
<name>ADEC_PETMO</name>
<evidence type="ECO:0000255" key="1">
    <source>
        <dbReference type="HAMAP-Rule" id="MF_01518"/>
    </source>
</evidence>